<comment type="function">
    <text evidence="1">Part of the ABC transporter complex ModABC involved in molybdenum import. Responsible for energy coupling to the transport system.</text>
</comment>
<comment type="catalytic activity">
    <reaction evidence="1">
        <text>molybdate(out) + ATP + H2O = molybdate(in) + ADP + phosphate + H(+)</text>
        <dbReference type="Rhea" id="RHEA:22020"/>
        <dbReference type="ChEBI" id="CHEBI:15377"/>
        <dbReference type="ChEBI" id="CHEBI:15378"/>
        <dbReference type="ChEBI" id="CHEBI:30616"/>
        <dbReference type="ChEBI" id="CHEBI:36264"/>
        <dbReference type="ChEBI" id="CHEBI:43474"/>
        <dbReference type="ChEBI" id="CHEBI:456216"/>
        <dbReference type="EC" id="7.3.2.5"/>
    </reaction>
</comment>
<comment type="subunit">
    <text evidence="1">The complex is composed of two ATP-binding proteins (ModC), two transmembrane proteins (ModB) and a solute-binding protein (ModA).</text>
</comment>
<comment type="subcellular location">
    <subcellularLocation>
        <location evidence="1">Cell inner membrane</location>
        <topology evidence="1">Peripheral membrane protein</topology>
    </subcellularLocation>
</comment>
<comment type="similarity">
    <text evidence="1">Belongs to the ABC transporter superfamily. Molybdate importer (TC 3.A.1.8) family.</text>
</comment>
<accession>Q47CB7</accession>
<sequence length="359" mass="39044">MNTEIKARFRVDRSDFTLDVDLSLPGRGITALFGHSGSGKTTCLRAMAGLERASAGYFALGDEVWQDESRGHFIPVHRRALGVVFQEASLFPHLSVRGNMEFGLKRKTTGTTRFSLPEIAELLGIAHLLNRPPDQLSGGERQRVAIARALLAAPKILLMDEPLAALDLKRKLEILPYLERLHSELAIPIIYVSHAPDEVARLADHLVLLDAGRVVASGALNQVLSRIDLPAAFADDAGVVIEATVAEHEVDDLTRLEFPGGAIYVSRRHEPVGTPLRCRIHARDVSLTLLPQMQSSILNCVSASVVDLAPTDTPGHVLVKLDVTGEPLLARITRRSAEKLEIRPGLALRAQIKAVALLA</sequence>
<proteinExistence type="inferred from homology"/>
<keyword id="KW-0067">ATP-binding</keyword>
<keyword id="KW-0997">Cell inner membrane</keyword>
<keyword id="KW-1003">Cell membrane</keyword>
<keyword id="KW-0472">Membrane</keyword>
<keyword id="KW-0500">Molybdenum</keyword>
<keyword id="KW-0547">Nucleotide-binding</keyword>
<keyword id="KW-1278">Translocase</keyword>
<keyword id="KW-0813">Transport</keyword>
<feature type="chain" id="PRO_0000271670" description="Molybdenum import ATP-binding protein ModC">
    <location>
        <begin position="1"/>
        <end position="359"/>
    </location>
</feature>
<feature type="domain" description="ABC transporter" evidence="1">
    <location>
        <begin position="1"/>
        <end position="236"/>
    </location>
</feature>
<feature type="domain" description="Mop" evidence="2">
    <location>
        <begin position="294"/>
        <end position="359"/>
    </location>
</feature>
<feature type="binding site" evidence="1">
    <location>
        <begin position="34"/>
        <end position="41"/>
    </location>
    <ligand>
        <name>ATP</name>
        <dbReference type="ChEBI" id="CHEBI:30616"/>
    </ligand>
</feature>
<name>MODC_DECAR</name>
<organism>
    <name type="scientific">Dechloromonas aromatica (strain RCB)</name>
    <dbReference type="NCBI Taxonomy" id="159087"/>
    <lineage>
        <taxon>Bacteria</taxon>
        <taxon>Pseudomonadati</taxon>
        <taxon>Pseudomonadota</taxon>
        <taxon>Betaproteobacteria</taxon>
        <taxon>Rhodocyclales</taxon>
        <taxon>Azonexaceae</taxon>
        <taxon>Dechloromonas</taxon>
    </lineage>
</organism>
<reference key="1">
    <citation type="journal article" date="2009" name="BMC Genomics">
        <title>Metabolic analysis of the soil microbe Dechloromonas aromatica str. RCB: indications of a surprisingly complex life-style and cryptic anaerobic pathways for aromatic degradation.</title>
        <authorList>
            <person name="Salinero K.K."/>
            <person name="Keller K."/>
            <person name="Feil W.S."/>
            <person name="Feil H."/>
            <person name="Trong S."/>
            <person name="Di Bartolo G."/>
            <person name="Lapidus A."/>
        </authorList>
    </citation>
    <scope>NUCLEOTIDE SEQUENCE [LARGE SCALE GENOMIC DNA]</scope>
    <source>
        <strain>RCB</strain>
    </source>
</reference>
<protein>
    <recommendedName>
        <fullName evidence="1">Molybdenum import ATP-binding protein ModC</fullName>
        <ecNumber evidence="1">7.3.2.5</ecNumber>
    </recommendedName>
</protein>
<dbReference type="EC" id="7.3.2.5" evidence="1"/>
<dbReference type="EMBL" id="CP000089">
    <property type="protein sequence ID" value="AAZ47514.1"/>
    <property type="molecule type" value="Genomic_DNA"/>
</dbReference>
<dbReference type="SMR" id="Q47CB7"/>
<dbReference type="STRING" id="159087.Daro_2784"/>
<dbReference type="KEGG" id="dar:Daro_2784"/>
<dbReference type="eggNOG" id="COG4148">
    <property type="taxonomic scope" value="Bacteria"/>
</dbReference>
<dbReference type="HOGENOM" id="CLU_000604_1_1_4"/>
<dbReference type="OrthoDB" id="5298774at2"/>
<dbReference type="GO" id="GO:0005886">
    <property type="term" value="C:plasma membrane"/>
    <property type="evidence" value="ECO:0007669"/>
    <property type="project" value="UniProtKB-SubCell"/>
</dbReference>
<dbReference type="GO" id="GO:0015412">
    <property type="term" value="F:ABC-type molybdate transporter activity"/>
    <property type="evidence" value="ECO:0007669"/>
    <property type="project" value="UniProtKB-EC"/>
</dbReference>
<dbReference type="GO" id="GO:0005524">
    <property type="term" value="F:ATP binding"/>
    <property type="evidence" value="ECO:0007669"/>
    <property type="project" value="UniProtKB-KW"/>
</dbReference>
<dbReference type="GO" id="GO:0016887">
    <property type="term" value="F:ATP hydrolysis activity"/>
    <property type="evidence" value="ECO:0007669"/>
    <property type="project" value="InterPro"/>
</dbReference>
<dbReference type="Gene3D" id="2.40.50.100">
    <property type="match status" value="1"/>
</dbReference>
<dbReference type="Gene3D" id="3.40.50.300">
    <property type="entry name" value="P-loop containing nucleotide triphosphate hydrolases"/>
    <property type="match status" value="1"/>
</dbReference>
<dbReference type="InterPro" id="IPR003593">
    <property type="entry name" value="AAA+_ATPase"/>
</dbReference>
<dbReference type="InterPro" id="IPR003439">
    <property type="entry name" value="ABC_transporter-like_ATP-bd"/>
</dbReference>
<dbReference type="InterPro" id="IPR017871">
    <property type="entry name" value="ABC_transporter-like_CS"/>
</dbReference>
<dbReference type="InterPro" id="IPR008995">
    <property type="entry name" value="Mo/tungstate-bd_C_term_dom"/>
</dbReference>
<dbReference type="InterPro" id="IPR011868">
    <property type="entry name" value="ModC_ABC_ATP-bd"/>
</dbReference>
<dbReference type="InterPro" id="IPR050334">
    <property type="entry name" value="Molybdenum_import_ModC"/>
</dbReference>
<dbReference type="InterPro" id="IPR004606">
    <property type="entry name" value="Mop_domain"/>
</dbReference>
<dbReference type="InterPro" id="IPR027417">
    <property type="entry name" value="P-loop_NTPase"/>
</dbReference>
<dbReference type="InterPro" id="IPR005116">
    <property type="entry name" value="Transp-assoc_OB_typ1"/>
</dbReference>
<dbReference type="NCBIfam" id="TIGR02142">
    <property type="entry name" value="modC_ABC"/>
    <property type="match status" value="1"/>
</dbReference>
<dbReference type="PANTHER" id="PTHR43514">
    <property type="entry name" value="ABC TRANSPORTER I FAMILY MEMBER 10"/>
    <property type="match status" value="1"/>
</dbReference>
<dbReference type="PANTHER" id="PTHR43514:SF10">
    <property type="entry name" value="MOLYBDENUM IMPORT ATP-BINDING PROTEIN MODC 2"/>
    <property type="match status" value="1"/>
</dbReference>
<dbReference type="Pfam" id="PF00005">
    <property type="entry name" value="ABC_tran"/>
    <property type="match status" value="1"/>
</dbReference>
<dbReference type="Pfam" id="PF03459">
    <property type="entry name" value="TOBE"/>
    <property type="match status" value="1"/>
</dbReference>
<dbReference type="SMART" id="SM00382">
    <property type="entry name" value="AAA"/>
    <property type="match status" value="1"/>
</dbReference>
<dbReference type="SUPFAM" id="SSF50331">
    <property type="entry name" value="MOP-like"/>
    <property type="match status" value="1"/>
</dbReference>
<dbReference type="SUPFAM" id="SSF52540">
    <property type="entry name" value="P-loop containing nucleoside triphosphate hydrolases"/>
    <property type="match status" value="1"/>
</dbReference>
<dbReference type="PROSITE" id="PS00211">
    <property type="entry name" value="ABC_TRANSPORTER_1"/>
    <property type="match status" value="1"/>
</dbReference>
<dbReference type="PROSITE" id="PS50893">
    <property type="entry name" value="ABC_TRANSPORTER_2"/>
    <property type="match status" value="1"/>
</dbReference>
<dbReference type="PROSITE" id="PS51241">
    <property type="entry name" value="MODC"/>
    <property type="match status" value="1"/>
</dbReference>
<dbReference type="PROSITE" id="PS51866">
    <property type="entry name" value="MOP"/>
    <property type="match status" value="1"/>
</dbReference>
<gene>
    <name evidence="1" type="primary">modC</name>
    <name type="ordered locus">Daro_2784</name>
</gene>
<evidence type="ECO:0000255" key="1">
    <source>
        <dbReference type="HAMAP-Rule" id="MF_01705"/>
    </source>
</evidence>
<evidence type="ECO:0000255" key="2">
    <source>
        <dbReference type="PROSITE-ProRule" id="PRU01213"/>
    </source>
</evidence>